<feature type="initiator methionine" description="Removed" evidence="1">
    <location>
        <position position="1"/>
    </location>
</feature>
<feature type="chain" id="PRO_0000326553" description="COP9 signalosome complex subunit 4">
    <location>
        <begin position="2"/>
        <end position="406"/>
    </location>
</feature>
<feature type="domain" description="PCI" evidence="2">
    <location>
        <begin position="197"/>
        <end position="366"/>
    </location>
</feature>
<feature type="modified residue" description="N-acetylalanine" evidence="1">
    <location>
        <position position="2"/>
    </location>
</feature>
<feature type="modified residue" description="N6-acetyllysine" evidence="1">
    <location>
        <position position="25"/>
    </location>
</feature>
<proteinExistence type="evidence at transcript level"/>
<keyword id="KW-0007">Acetylation</keyword>
<keyword id="KW-0963">Cytoplasm</keyword>
<keyword id="KW-0968">Cytoplasmic vesicle</keyword>
<keyword id="KW-0539">Nucleus</keyword>
<keyword id="KW-1185">Reference proteome</keyword>
<keyword id="KW-0736">Signalosome</keyword>
<keyword id="KW-0770">Synapse</keyword>
<organism>
    <name type="scientific">Macaca fascicularis</name>
    <name type="common">Crab-eating macaque</name>
    <name type="synonym">Cynomolgus monkey</name>
    <dbReference type="NCBI Taxonomy" id="9541"/>
    <lineage>
        <taxon>Eukaryota</taxon>
        <taxon>Metazoa</taxon>
        <taxon>Chordata</taxon>
        <taxon>Craniata</taxon>
        <taxon>Vertebrata</taxon>
        <taxon>Euteleostomi</taxon>
        <taxon>Mammalia</taxon>
        <taxon>Eutheria</taxon>
        <taxon>Euarchontoglires</taxon>
        <taxon>Primates</taxon>
        <taxon>Haplorrhini</taxon>
        <taxon>Catarrhini</taxon>
        <taxon>Cercopithecidae</taxon>
        <taxon>Cercopithecinae</taxon>
        <taxon>Macaca</taxon>
    </lineage>
</organism>
<comment type="function">
    <text evidence="1">Component of the COP9 signalosome complex (CSN), a complex involved in various cellular and developmental processes (By similarity). The CSN complex is an essential regulator of the ubiquitin (Ubl) conjugation pathway by mediating the deneddylation of the cullin subunits of SCF-type E3 ligase complexes, leading to decrease the Ubl ligase activity of SCF-type complexes such as SCF, CSA or DDB2 (By similarity). Also involved in the deneddylation of non-cullin subunits such as STON2 (By similarity). The complex is also involved in phosphorylation of p53/TP53, c-jun/JUN, IkappaBalpha/NFKBIA, ITPK1, IRF8/ICSBP and SNAPIN, possibly via its association with CK2 and PKD kinases (By similarity). CSN-dependent phosphorylation of TP53 and JUN promotes and protects degradation by the Ubl system, respectively (By similarity).</text>
</comment>
<comment type="subunit">
    <text evidence="1">Component of the CSN complex, composed of COPS1/GPS1, COPS2, COPS3, COPS4, COPS5, COPS6, COPS7 (COPS7A or COPS7B), COPS8 and COPS9 (By similarity). In the complex, it probably interacts directly with COPS1, COPS2, COPS3, COPS5, COPS6, COPS7 (COPS7A or COPS7B) and COPS8 (By similarity). Interacts with TOR1A; the interaction is direct and associates TOR1A and SNAPIN with the CSN complex (By similarity). Interacts with STON2; controls STON2 neddylation levels (By similarity). Interacts with ERCC6 (By similarity).</text>
</comment>
<comment type="subcellular location">
    <subcellularLocation>
        <location evidence="1">Cytoplasm</location>
    </subcellularLocation>
    <subcellularLocation>
        <location evidence="1">Nucleus</location>
    </subcellularLocation>
    <subcellularLocation>
        <location evidence="1">Cytoplasmic vesicle</location>
        <location evidence="1">Secretory vesicle</location>
        <location evidence="1">Synaptic vesicle</location>
    </subcellularLocation>
</comment>
<comment type="similarity">
    <text evidence="3">Belongs to the CSN4 family.</text>
</comment>
<reference key="1">
    <citation type="submission" date="2005-06" db="EMBL/GenBank/DDBJ databases">
        <title>DNA sequences of macaque genes expressed in brain or testis and its evolutionary implications.</title>
        <authorList>
            <consortium name="International consortium for macaque cDNA sequencing and analysis"/>
        </authorList>
    </citation>
    <scope>NUCLEOTIDE SEQUENCE [LARGE SCALE MRNA]</scope>
    <source>
        <tissue>Parietal cortex</tissue>
    </source>
</reference>
<accession>Q4R5E6</accession>
<sequence length="406" mass="46269">MAAAVRQDLAQLMNSSGSHKDLAGKYRQILEKAIQLSGAEQLEALKAFVEAMVNENVSLVISRQLLTDFCTHLPNLPDSTAKEIYHFTLEKIQPRVISFEEQVASIRQHLASIYEKEEDWRNAAQVLVGIPLETGQKQYNVDYKLETYLKIARLYLEDDDPVQAEAYINRASLLQNESTNEQLQIHYKVCYARVLDYRRKFIEAAQRYNELSYKTIVHESERLEALKHALHCTILASAGQQRSRMLATLFKDERCQQLAAYGILEKMYLDRIIRGNQLQEFAAMLMPHQKATTADGSSILDRAVIEHNLLSASKLYNNITFEELGALLEIPAAKAEKIASQMITEGRMNGFIDQIDGIVHFETREALPTWDKQIQSLCFQVNNLLEKISQTAPEWTAQAMEAQMAQ</sequence>
<gene>
    <name type="primary">COPS4</name>
    <name type="ORF">QnpA-15976</name>
</gene>
<protein>
    <recommendedName>
        <fullName>COP9 signalosome complex subunit 4</fullName>
        <shortName>SGN4</shortName>
        <shortName>Signalosome subunit 4</shortName>
    </recommendedName>
</protein>
<evidence type="ECO:0000250" key="1">
    <source>
        <dbReference type="UniProtKB" id="Q9BT78"/>
    </source>
</evidence>
<evidence type="ECO:0000255" key="2">
    <source>
        <dbReference type="PROSITE-ProRule" id="PRU01185"/>
    </source>
</evidence>
<evidence type="ECO:0000305" key="3"/>
<name>CSN4_MACFA</name>
<dbReference type="EMBL" id="AB169597">
    <property type="protein sequence ID" value="BAE01679.1"/>
    <property type="molecule type" value="mRNA"/>
</dbReference>
<dbReference type="RefSeq" id="NP_001270140.1">
    <property type="nucleotide sequence ID" value="NM_001283211.1"/>
</dbReference>
<dbReference type="RefSeq" id="XP_045248316.1">
    <property type="nucleotide sequence ID" value="XM_045392381.2"/>
</dbReference>
<dbReference type="SMR" id="Q4R5E6"/>
<dbReference type="STRING" id="9541.ENSMFAP00000027787"/>
<dbReference type="Ensembl" id="ENSMFAT00000001937.2">
    <property type="protein sequence ID" value="ENSMFAP00000027751.1"/>
    <property type="gene ID" value="ENSMFAG00000045246.2"/>
</dbReference>
<dbReference type="GeneID" id="101925908"/>
<dbReference type="VEuPathDB" id="HostDB:ENSMFAG00000045246"/>
<dbReference type="eggNOG" id="KOG1497">
    <property type="taxonomic scope" value="Eukaryota"/>
</dbReference>
<dbReference type="GeneTree" id="ENSGT00940000153510"/>
<dbReference type="OMA" id="KNIMHTV"/>
<dbReference type="Proteomes" id="UP000233100">
    <property type="component" value="Chromosome 5"/>
</dbReference>
<dbReference type="Bgee" id="ENSMFAG00000045246">
    <property type="expression patterns" value="Expressed in skeletal muscle tissue and 13 other cell types or tissues"/>
</dbReference>
<dbReference type="GO" id="GO:0008180">
    <property type="term" value="C:COP9 signalosome"/>
    <property type="evidence" value="ECO:0007669"/>
    <property type="project" value="UniProtKB-KW"/>
</dbReference>
<dbReference type="GO" id="GO:0005829">
    <property type="term" value="C:cytosol"/>
    <property type="evidence" value="ECO:0007669"/>
    <property type="project" value="TreeGrafter"/>
</dbReference>
<dbReference type="GO" id="GO:0008021">
    <property type="term" value="C:synaptic vesicle"/>
    <property type="evidence" value="ECO:0007669"/>
    <property type="project" value="UniProtKB-SubCell"/>
</dbReference>
<dbReference type="GO" id="GO:0000338">
    <property type="term" value="P:protein deneddylation"/>
    <property type="evidence" value="ECO:0000250"/>
    <property type="project" value="UniProtKB"/>
</dbReference>
<dbReference type="FunFam" id="1.10.10.10:FF:000130">
    <property type="entry name" value="COP9 signalosome complex subunit 4"/>
    <property type="match status" value="1"/>
</dbReference>
<dbReference type="Gene3D" id="1.10.10.10">
    <property type="entry name" value="Winged helix-like DNA-binding domain superfamily/Winged helix DNA-binding domain"/>
    <property type="match status" value="1"/>
</dbReference>
<dbReference type="InterPro" id="IPR041406">
    <property type="entry name" value="CSN4_HTH"/>
</dbReference>
<dbReference type="InterPro" id="IPR000717">
    <property type="entry name" value="PCI_dom"/>
</dbReference>
<dbReference type="InterPro" id="IPR054559">
    <property type="entry name" value="PSMD12-CSN4-like_N"/>
</dbReference>
<dbReference type="InterPro" id="IPR040134">
    <property type="entry name" value="PSMD12/CSN4"/>
</dbReference>
<dbReference type="InterPro" id="IPR036388">
    <property type="entry name" value="WH-like_DNA-bd_sf"/>
</dbReference>
<dbReference type="InterPro" id="IPR036390">
    <property type="entry name" value="WH_DNA-bd_sf"/>
</dbReference>
<dbReference type="PANTHER" id="PTHR10855">
    <property type="entry name" value="26S PROTEASOME NON-ATPASE REGULATORY SUBUNIT 12/COP9 SIGNALOSOME COMPLEX SUBUNIT 4"/>
    <property type="match status" value="1"/>
</dbReference>
<dbReference type="PANTHER" id="PTHR10855:SF2">
    <property type="entry name" value="COP9 SIGNALOSOME COMPLEX SUBUNIT 4"/>
    <property type="match status" value="1"/>
</dbReference>
<dbReference type="Pfam" id="PF18420">
    <property type="entry name" value="CSN4_RPN5_eIF3a"/>
    <property type="match status" value="1"/>
</dbReference>
<dbReference type="Pfam" id="PF01399">
    <property type="entry name" value="PCI"/>
    <property type="match status" value="1"/>
</dbReference>
<dbReference type="Pfam" id="PF22241">
    <property type="entry name" value="PSMD12-CSN4_N"/>
    <property type="match status" value="1"/>
</dbReference>
<dbReference type="SMART" id="SM00088">
    <property type="entry name" value="PINT"/>
    <property type="match status" value="1"/>
</dbReference>
<dbReference type="SUPFAM" id="SSF46785">
    <property type="entry name" value="Winged helix' DNA-binding domain"/>
    <property type="match status" value="1"/>
</dbReference>
<dbReference type="PROSITE" id="PS50250">
    <property type="entry name" value="PCI"/>
    <property type="match status" value="1"/>
</dbReference>